<organism>
    <name type="scientific">Campylobacter curvus (strain 525.92)</name>
    <dbReference type="NCBI Taxonomy" id="360105"/>
    <lineage>
        <taxon>Bacteria</taxon>
        <taxon>Pseudomonadati</taxon>
        <taxon>Campylobacterota</taxon>
        <taxon>Epsilonproteobacteria</taxon>
        <taxon>Campylobacterales</taxon>
        <taxon>Campylobacteraceae</taxon>
        <taxon>Campylobacter</taxon>
    </lineage>
</organism>
<evidence type="ECO:0000255" key="1">
    <source>
        <dbReference type="HAMAP-Rule" id="MF_00093"/>
    </source>
</evidence>
<evidence type="ECO:0000256" key="2">
    <source>
        <dbReference type="SAM" id="MobiDB-lite"/>
    </source>
</evidence>
<reference key="1">
    <citation type="submission" date="2007-07" db="EMBL/GenBank/DDBJ databases">
        <title>Genome sequence of Campylobacter curvus 525.92 isolated from human feces.</title>
        <authorList>
            <person name="Fouts D.E."/>
            <person name="Mongodin E.F."/>
            <person name="Puiu D."/>
            <person name="Sebastian Y."/>
            <person name="Miller W.G."/>
            <person name="Mandrell R.E."/>
            <person name="Lastovica A.J."/>
            <person name="Nelson K.E."/>
        </authorList>
    </citation>
    <scope>NUCLEOTIDE SEQUENCE [LARGE SCALE GENOMIC DNA]</scope>
    <source>
        <strain>525.92</strain>
    </source>
</reference>
<accession>A7GW12</accession>
<gene>
    <name evidence="1" type="primary">prfA</name>
    <name type="ordered locus">Ccur92_01000</name>
    <name type="ORF">CCV52592_0740</name>
</gene>
<feature type="chain" id="PRO_1000004872" description="Peptide chain release factor 1">
    <location>
        <begin position="1"/>
        <end position="355"/>
    </location>
</feature>
<feature type="region of interest" description="Disordered" evidence="2">
    <location>
        <begin position="283"/>
        <end position="303"/>
    </location>
</feature>
<feature type="compositionally biased region" description="Basic and acidic residues" evidence="2">
    <location>
        <begin position="283"/>
        <end position="292"/>
    </location>
</feature>
<feature type="modified residue" description="N5-methylglutamine" evidence="1">
    <location>
        <position position="231"/>
    </location>
</feature>
<protein>
    <recommendedName>
        <fullName evidence="1">Peptide chain release factor 1</fullName>
        <shortName evidence="1">RF-1</shortName>
    </recommendedName>
</protein>
<sequence>MFADKLRPFLDRYNEISALLGDPNIINDIEKMTKLSKEQSSIEPIKNAASQYLQTLDDIEENKALLDDAELGELAREELKSAQIRKEELENEIKILLLPKDPNDDKNIFLEIRAGTGGDEAALFVGDLFNAYIRYADLRGYKFEIVSQSEGSAGGFKEIILLIKGKGAYSRLKFEGGTHRVQRVPETESQGRVHTSAVTVAIMPEVEDSEIEINPNDLRIDVMRSSGHGGQSVNTTDSAVRITHIPTGLVVTNQDGKSQHKNKEAAMKVLKARLYEMQEAERIAKETSERKSQVGTGDRSGRIRTYNFPQNRISDHRINLTLYRLDAIMAGGLFDEIIEPLIAHHQAEAITDAGL</sequence>
<comment type="function">
    <text evidence="1">Peptide chain release factor 1 directs the termination of translation in response to the peptide chain termination codons UAG and UAA.</text>
</comment>
<comment type="subcellular location">
    <subcellularLocation>
        <location evidence="1">Cytoplasm</location>
    </subcellularLocation>
</comment>
<comment type="PTM">
    <text evidence="1">Methylated by PrmC. Methylation increases the termination efficiency of RF1.</text>
</comment>
<comment type="similarity">
    <text evidence="1">Belongs to the prokaryotic/mitochondrial release factor family.</text>
</comment>
<dbReference type="EMBL" id="CP000767">
    <property type="protein sequence ID" value="EAT99666.1"/>
    <property type="molecule type" value="Genomic_DNA"/>
</dbReference>
<dbReference type="RefSeq" id="WP_011991680.1">
    <property type="nucleotide sequence ID" value="NC_009715.2"/>
</dbReference>
<dbReference type="SMR" id="A7GW12"/>
<dbReference type="STRING" id="360105.CCV52592_0740"/>
<dbReference type="KEGG" id="ccv:CCV52592_0740"/>
<dbReference type="HOGENOM" id="CLU_036856_0_1_7"/>
<dbReference type="OrthoDB" id="9806673at2"/>
<dbReference type="Proteomes" id="UP000006380">
    <property type="component" value="Chromosome"/>
</dbReference>
<dbReference type="GO" id="GO:0005737">
    <property type="term" value="C:cytoplasm"/>
    <property type="evidence" value="ECO:0007669"/>
    <property type="project" value="UniProtKB-SubCell"/>
</dbReference>
<dbReference type="GO" id="GO:0016149">
    <property type="term" value="F:translation release factor activity, codon specific"/>
    <property type="evidence" value="ECO:0007669"/>
    <property type="project" value="UniProtKB-UniRule"/>
</dbReference>
<dbReference type="FunFam" id="3.30.160.20:FF:000004">
    <property type="entry name" value="Peptide chain release factor 1"/>
    <property type="match status" value="1"/>
</dbReference>
<dbReference type="FunFam" id="3.30.70.1660:FF:000002">
    <property type="entry name" value="Peptide chain release factor 1"/>
    <property type="match status" value="1"/>
</dbReference>
<dbReference type="FunFam" id="3.30.70.1660:FF:000004">
    <property type="entry name" value="Peptide chain release factor 1"/>
    <property type="match status" value="1"/>
</dbReference>
<dbReference type="Gene3D" id="3.30.160.20">
    <property type="match status" value="1"/>
</dbReference>
<dbReference type="Gene3D" id="3.30.70.1660">
    <property type="match status" value="1"/>
</dbReference>
<dbReference type="Gene3D" id="6.10.140.1950">
    <property type="match status" value="1"/>
</dbReference>
<dbReference type="HAMAP" id="MF_00093">
    <property type="entry name" value="Rel_fac_1"/>
    <property type="match status" value="1"/>
</dbReference>
<dbReference type="InterPro" id="IPR005139">
    <property type="entry name" value="PCRF"/>
</dbReference>
<dbReference type="InterPro" id="IPR000352">
    <property type="entry name" value="Pep_chain_release_fac_I"/>
</dbReference>
<dbReference type="InterPro" id="IPR045853">
    <property type="entry name" value="Pep_chain_release_fac_I_sf"/>
</dbReference>
<dbReference type="InterPro" id="IPR050057">
    <property type="entry name" value="Prokaryotic/Mito_RF"/>
</dbReference>
<dbReference type="InterPro" id="IPR004373">
    <property type="entry name" value="RF-1"/>
</dbReference>
<dbReference type="NCBIfam" id="TIGR00019">
    <property type="entry name" value="prfA"/>
    <property type="match status" value="1"/>
</dbReference>
<dbReference type="NCBIfam" id="NF001859">
    <property type="entry name" value="PRK00591.1"/>
    <property type="match status" value="1"/>
</dbReference>
<dbReference type="PANTHER" id="PTHR43804">
    <property type="entry name" value="LD18447P"/>
    <property type="match status" value="1"/>
</dbReference>
<dbReference type="PANTHER" id="PTHR43804:SF7">
    <property type="entry name" value="LD18447P"/>
    <property type="match status" value="1"/>
</dbReference>
<dbReference type="Pfam" id="PF03462">
    <property type="entry name" value="PCRF"/>
    <property type="match status" value="1"/>
</dbReference>
<dbReference type="Pfam" id="PF00472">
    <property type="entry name" value="RF-1"/>
    <property type="match status" value="1"/>
</dbReference>
<dbReference type="SMART" id="SM00937">
    <property type="entry name" value="PCRF"/>
    <property type="match status" value="1"/>
</dbReference>
<dbReference type="SUPFAM" id="SSF75620">
    <property type="entry name" value="Release factor"/>
    <property type="match status" value="1"/>
</dbReference>
<dbReference type="PROSITE" id="PS00745">
    <property type="entry name" value="RF_PROK_I"/>
    <property type="match status" value="1"/>
</dbReference>
<name>RF1_CAMC5</name>
<keyword id="KW-0963">Cytoplasm</keyword>
<keyword id="KW-0488">Methylation</keyword>
<keyword id="KW-0648">Protein biosynthesis</keyword>
<keyword id="KW-1185">Reference proteome</keyword>
<proteinExistence type="inferred from homology"/>